<comment type="function">
    <text evidence="1">Catalyzes the formation of acetyl phosphate from acetate and ATP. Can also catalyze the reverse reaction.</text>
</comment>
<comment type="catalytic activity">
    <reaction evidence="1">
        <text>acetate + ATP = acetyl phosphate + ADP</text>
        <dbReference type="Rhea" id="RHEA:11352"/>
        <dbReference type="ChEBI" id="CHEBI:22191"/>
        <dbReference type="ChEBI" id="CHEBI:30089"/>
        <dbReference type="ChEBI" id="CHEBI:30616"/>
        <dbReference type="ChEBI" id="CHEBI:456216"/>
        <dbReference type="EC" id="2.7.2.1"/>
    </reaction>
</comment>
<comment type="cofactor">
    <cofactor evidence="1">
        <name>Mg(2+)</name>
        <dbReference type="ChEBI" id="CHEBI:18420"/>
    </cofactor>
    <cofactor evidence="1">
        <name>Mn(2+)</name>
        <dbReference type="ChEBI" id="CHEBI:29035"/>
    </cofactor>
    <text evidence="1">Mg(2+). Can also accept Mn(2+).</text>
</comment>
<comment type="pathway">
    <text evidence="1">Metabolic intermediate biosynthesis; acetyl-CoA biosynthesis; acetyl-CoA from acetate: step 1/2.</text>
</comment>
<comment type="subunit">
    <text evidence="1">Homodimer.</text>
</comment>
<comment type="subcellular location">
    <subcellularLocation>
        <location>Cytoplasm</location>
    </subcellularLocation>
</comment>
<comment type="induction">
    <text evidence="2 3 4">Activated by RamA and repressed by RamB and GlxR.</text>
</comment>
<comment type="similarity">
    <text evidence="1">Belongs to the acetokinase family.</text>
</comment>
<protein>
    <recommendedName>
        <fullName evidence="1">Acetate kinase</fullName>
        <ecNumber evidence="1">2.7.2.1</ecNumber>
    </recommendedName>
    <alternativeName>
        <fullName evidence="1">Acetokinase</fullName>
    </alternativeName>
</protein>
<feature type="chain" id="PRO_0000107553" description="Acetate kinase">
    <location>
        <begin position="1"/>
        <end position="397"/>
    </location>
</feature>
<feature type="active site" description="Proton donor/acceptor" evidence="1">
    <location>
        <position position="149"/>
    </location>
</feature>
<feature type="binding site" evidence="1">
    <location>
        <position position="8"/>
    </location>
    <ligand>
        <name>Mg(2+)</name>
        <dbReference type="ChEBI" id="CHEBI:18420"/>
    </ligand>
</feature>
<feature type="binding site" evidence="1">
    <location>
        <position position="15"/>
    </location>
    <ligand>
        <name>ATP</name>
        <dbReference type="ChEBI" id="CHEBI:30616"/>
    </ligand>
</feature>
<feature type="binding site" evidence="1">
    <location>
        <position position="92"/>
    </location>
    <ligand>
        <name>substrate</name>
    </ligand>
</feature>
<feature type="binding site" evidence="1">
    <location>
        <begin position="209"/>
        <end position="213"/>
    </location>
    <ligand>
        <name>ATP</name>
        <dbReference type="ChEBI" id="CHEBI:30616"/>
    </ligand>
</feature>
<feature type="binding site" evidence="1">
    <location>
        <begin position="283"/>
        <end position="285"/>
    </location>
    <ligand>
        <name>ATP</name>
        <dbReference type="ChEBI" id="CHEBI:30616"/>
    </ligand>
</feature>
<feature type="binding site" evidence="1">
    <location>
        <begin position="331"/>
        <end position="335"/>
    </location>
    <ligand>
        <name>ATP</name>
        <dbReference type="ChEBI" id="CHEBI:30616"/>
    </ligand>
</feature>
<feature type="binding site" evidence="1">
    <location>
        <position position="385"/>
    </location>
    <ligand>
        <name>Mg(2+)</name>
        <dbReference type="ChEBI" id="CHEBI:18420"/>
    </ligand>
</feature>
<feature type="site" description="Transition state stabilizer" evidence="1">
    <location>
        <position position="181"/>
    </location>
</feature>
<feature type="site" description="Transition state stabilizer" evidence="1">
    <location>
        <position position="242"/>
    </location>
</feature>
<evidence type="ECO:0000255" key="1">
    <source>
        <dbReference type="HAMAP-Rule" id="MF_00020"/>
    </source>
</evidence>
<evidence type="ECO:0000269" key="2">
    <source>
    </source>
</evidence>
<evidence type="ECO:0000269" key="3">
    <source>
    </source>
</evidence>
<evidence type="ECO:0000269" key="4">
    <source>
    </source>
</evidence>
<gene>
    <name evidence="1" type="primary">ackA</name>
    <name type="synonym">ack</name>
    <name type="ordered locus">Cgl2752</name>
    <name type="ordered locus">cg3047</name>
</gene>
<sequence length="397" mass="43092">MALALVLNSGSSSIKFQLVNPENSAIDEPYVSGLVEQIGEPNGRIVLKIEGEKYTLETPIADHSEGLNLAFDLMDQHNCGPSQLEITAVGHRVVHGGILFSAPELITDEIVEMIRDLIPLAPLHNPANVDGIDVARKILPDVPHVAVFDTGFFHSLPPAAALYAINKDVAAEHGIRRYGFHGTSHEFVSKRVVEILEKPTEDINTITFHLGNGASMAAVQGGRAVDTSMGMTPLAGLVMGTRSGDIDPGIVFHLSRTAGMSIDEIDNLLNKKSGVKGLSGVNDFRELREMIDNNDQDAWSAYNIYIHQLRRYLGSYMVALGRVDTIVFTAGVGENAQFVREDALAGLEMYGIEIDPERNALPNDGPRLISTDASKVKVFVIPTNEELAIARYAVKFA</sequence>
<dbReference type="EC" id="2.7.2.1" evidence="1"/>
<dbReference type="EMBL" id="X89084">
    <property type="protein sequence ID" value="CAA61456.1"/>
    <property type="molecule type" value="Genomic_DNA"/>
</dbReference>
<dbReference type="EMBL" id="BA000036">
    <property type="protein sequence ID" value="BAC00146.1"/>
    <property type="molecule type" value="Genomic_DNA"/>
</dbReference>
<dbReference type="EMBL" id="BX927156">
    <property type="protein sequence ID" value="CAF20774.1"/>
    <property type="molecule type" value="Genomic_DNA"/>
</dbReference>
<dbReference type="RefSeq" id="NP_601947.1">
    <property type="nucleotide sequence ID" value="NC_003450.3"/>
</dbReference>
<dbReference type="RefSeq" id="WP_003862874.1">
    <property type="nucleotide sequence ID" value="NC_006958.1"/>
</dbReference>
<dbReference type="SMR" id="P77845"/>
<dbReference type="STRING" id="196627.cg3047"/>
<dbReference type="KEGG" id="cgb:cg3047"/>
<dbReference type="KEGG" id="cgl:Cgl2752"/>
<dbReference type="PATRIC" id="fig|196627.13.peg.2683"/>
<dbReference type="eggNOG" id="COG0282">
    <property type="taxonomic scope" value="Bacteria"/>
</dbReference>
<dbReference type="HOGENOM" id="CLU_020352_0_1_11"/>
<dbReference type="OrthoDB" id="9802453at2"/>
<dbReference type="BioCyc" id="CORYNE:G18NG-12369-MONOMER"/>
<dbReference type="UniPathway" id="UPA00340">
    <property type="reaction ID" value="UER00458"/>
</dbReference>
<dbReference type="Proteomes" id="UP000000582">
    <property type="component" value="Chromosome"/>
</dbReference>
<dbReference type="Proteomes" id="UP000001009">
    <property type="component" value="Chromosome"/>
</dbReference>
<dbReference type="GO" id="GO:0005737">
    <property type="term" value="C:cytoplasm"/>
    <property type="evidence" value="ECO:0007669"/>
    <property type="project" value="UniProtKB-SubCell"/>
</dbReference>
<dbReference type="GO" id="GO:0008776">
    <property type="term" value="F:acetate kinase activity"/>
    <property type="evidence" value="ECO:0007669"/>
    <property type="project" value="UniProtKB-UniRule"/>
</dbReference>
<dbReference type="GO" id="GO:0005524">
    <property type="term" value="F:ATP binding"/>
    <property type="evidence" value="ECO:0007669"/>
    <property type="project" value="UniProtKB-KW"/>
</dbReference>
<dbReference type="GO" id="GO:0000287">
    <property type="term" value="F:magnesium ion binding"/>
    <property type="evidence" value="ECO:0007669"/>
    <property type="project" value="UniProtKB-UniRule"/>
</dbReference>
<dbReference type="GO" id="GO:0006083">
    <property type="term" value="P:acetate metabolic process"/>
    <property type="evidence" value="ECO:0007669"/>
    <property type="project" value="TreeGrafter"/>
</dbReference>
<dbReference type="GO" id="GO:0006085">
    <property type="term" value="P:acetyl-CoA biosynthetic process"/>
    <property type="evidence" value="ECO:0007669"/>
    <property type="project" value="UniProtKB-UniRule"/>
</dbReference>
<dbReference type="CDD" id="cd24010">
    <property type="entry name" value="ASKHA_NBD_AcK_PK"/>
    <property type="match status" value="1"/>
</dbReference>
<dbReference type="Gene3D" id="3.30.420.40">
    <property type="match status" value="2"/>
</dbReference>
<dbReference type="HAMAP" id="MF_00020">
    <property type="entry name" value="Acetate_kinase"/>
    <property type="match status" value="1"/>
</dbReference>
<dbReference type="InterPro" id="IPR004372">
    <property type="entry name" value="Ac/propionate_kinase"/>
</dbReference>
<dbReference type="InterPro" id="IPR000890">
    <property type="entry name" value="Aliphatic_acid_kin_short-chain"/>
</dbReference>
<dbReference type="InterPro" id="IPR023865">
    <property type="entry name" value="Aliphatic_acid_kinase_CS"/>
</dbReference>
<dbReference type="InterPro" id="IPR043129">
    <property type="entry name" value="ATPase_NBD"/>
</dbReference>
<dbReference type="NCBIfam" id="TIGR00016">
    <property type="entry name" value="ackA"/>
    <property type="match status" value="1"/>
</dbReference>
<dbReference type="PANTHER" id="PTHR21060">
    <property type="entry name" value="ACETATE KINASE"/>
    <property type="match status" value="1"/>
</dbReference>
<dbReference type="PANTHER" id="PTHR21060:SF15">
    <property type="entry name" value="ACETATE KINASE-RELATED"/>
    <property type="match status" value="1"/>
</dbReference>
<dbReference type="Pfam" id="PF00871">
    <property type="entry name" value="Acetate_kinase"/>
    <property type="match status" value="1"/>
</dbReference>
<dbReference type="PIRSF" id="PIRSF000722">
    <property type="entry name" value="Acetate_prop_kin"/>
    <property type="match status" value="1"/>
</dbReference>
<dbReference type="PRINTS" id="PR00471">
    <property type="entry name" value="ACETATEKNASE"/>
</dbReference>
<dbReference type="SUPFAM" id="SSF53067">
    <property type="entry name" value="Actin-like ATPase domain"/>
    <property type="match status" value="2"/>
</dbReference>
<dbReference type="PROSITE" id="PS01075">
    <property type="entry name" value="ACETATE_KINASE_1"/>
    <property type="match status" value="1"/>
</dbReference>
<dbReference type="PROSITE" id="PS01076">
    <property type="entry name" value="ACETATE_KINASE_2"/>
    <property type="match status" value="1"/>
</dbReference>
<organism>
    <name type="scientific">Corynebacterium glutamicum (strain ATCC 13032 / DSM 20300 / JCM 1318 / BCRC 11384 / CCUG 27702 / LMG 3730 / NBRC 12168 / NCIMB 10025 / NRRL B-2784 / 534)</name>
    <dbReference type="NCBI Taxonomy" id="196627"/>
    <lineage>
        <taxon>Bacteria</taxon>
        <taxon>Bacillati</taxon>
        <taxon>Actinomycetota</taxon>
        <taxon>Actinomycetes</taxon>
        <taxon>Mycobacteriales</taxon>
        <taxon>Corynebacteriaceae</taxon>
        <taxon>Corynebacterium</taxon>
    </lineage>
</organism>
<keyword id="KW-0067">ATP-binding</keyword>
<keyword id="KW-0963">Cytoplasm</keyword>
<keyword id="KW-0418">Kinase</keyword>
<keyword id="KW-0460">Magnesium</keyword>
<keyword id="KW-0479">Metal-binding</keyword>
<keyword id="KW-0547">Nucleotide-binding</keyword>
<keyword id="KW-1185">Reference proteome</keyword>
<keyword id="KW-0808">Transferase</keyword>
<name>ACKA_CORGL</name>
<accession>P77845</accession>
<reference key="1">
    <citation type="journal article" date="1999" name="Microbiology">
        <title>Cloning, sequence analysis, expression and inactivation of the Corynebacterium glutamicum pta-ack operon encoding phosphotransacetylase and acetate kinase.</title>
        <authorList>
            <person name="Reinscheid D.J."/>
            <person name="Schnicke S."/>
            <person name="Rittmann D."/>
            <person name="Zahnow U."/>
            <person name="Sahm H."/>
            <person name="Eikmanns B.J."/>
        </authorList>
    </citation>
    <scope>NUCLEOTIDE SEQUENCE [GENOMIC DNA]</scope>
    <source>
        <strain>ATCC 13032 / DSM 20300 / JCM 1318 / BCRC 11384 / CCUG 27702 / LMG 3730 / NBRC 12168 / NCIMB 10025 / NRRL B-2784 / 534</strain>
    </source>
</reference>
<reference key="2">
    <citation type="journal article" date="2003" name="Appl. Microbiol. Biotechnol.">
        <title>The Corynebacterium glutamicum genome: features and impacts on biotechnological processes.</title>
        <authorList>
            <person name="Ikeda M."/>
            <person name="Nakagawa S."/>
        </authorList>
    </citation>
    <scope>NUCLEOTIDE SEQUENCE [LARGE SCALE GENOMIC DNA]</scope>
    <source>
        <strain>ATCC 13032 / DSM 20300 / JCM 1318 / BCRC 11384 / CCUG 27702 / LMG 3730 / NBRC 12168 / NCIMB 10025 / NRRL B-2784 / 534</strain>
    </source>
</reference>
<reference key="3">
    <citation type="journal article" date="2003" name="J. Biotechnol.">
        <title>The complete Corynebacterium glutamicum ATCC 13032 genome sequence and its impact on the production of L-aspartate-derived amino acids and vitamins.</title>
        <authorList>
            <person name="Kalinowski J."/>
            <person name="Bathe B."/>
            <person name="Bartels D."/>
            <person name="Bischoff N."/>
            <person name="Bott M."/>
            <person name="Burkovski A."/>
            <person name="Dusch N."/>
            <person name="Eggeling L."/>
            <person name="Eikmanns B.J."/>
            <person name="Gaigalat L."/>
            <person name="Goesmann A."/>
            <person name="Hartmann M."/>
            <person name="Huthmacher K."/>
            <person name="Kraemer R."/>
            <person name="Linke B."/>
            <person name="McHardy A.C."/>
            <person name="Meyer F."/>
            <person name="Moeckel B."/>
            <person name="Pfefferle W."/>
            <person name="Puehler A."/>
            <person name="Rey D.A."/>
            <person name="Rueckert C."/>
            <person name="Rupp O."/>
            <person name="Sahm H."/>
            <person name="Wendisch V.F."/>
            <person name="Wiegraebe I."/>
            <person name="Tauch A."/>
        </authorList>
    </citation>
    <scope>NUCLEOTIDE SEQUENCE [LARGE SCALE GENOMIC DNA]</scope>
    <source>
        <strain>ATCC 13032 / DSM 20300 / JCM 1318 / BCRC 11384 / CCUG 27702 / LMG 3730 / NBRC 12168 / NCIMB 10025 / NRRL B-2784 / 534</strain>
    </source>
</reference>
<reference key="4">
    <citation type="journal article" date="2004" name="J. Bacteriol.">
        <title>RamB, a novel transcriptional regulator of genes involved in acetate metabolism of Corynebacterium glutamicum.</title>
        <authorList>
            <person name="Gerstmeir R."/>
            <person name="Cramer A."/>
            <person name="Dangel P."/>
            <person name="Schaffer S."/>
            <person name="Eikmanns B.J."/>
        </authorList>
    </citation>
    <scope>INDUCTION</scope>
    <source>
        <strain>ATCC 13032 / DSM 20300 / JCM 1318 / BCRC 11384 / CCUG 27702 / LMG 3730 / NBRC 12168 / NCIMB 10025 / NRRL B-2784 / 534</strain>
    </source>
</reference>
<reference key="5">
    <citation type="journal article" date="2006" name="J. Bacteriol.">
        <title>Identification of RamA, a novel LuxR-type transcriptional regulator of genes involved in acetate metabolism of Corynebacterium glutamicum.</title>
        <authorList>
            <person name="Cramer A."/>
            <person name="Gerstmeir R."/>
            <person name="Schaffer S."/>
            <person name="Bott M."/>
            <person name="Eikmanns B.J."/>
        </authorList>
    </citation>
    <scope>INDUCTION</scope>
    <source>
        <strain>ATCC 13032 / DSM 20300 / JCM 1318 / BCRC 11384 / CCUG 27702 / LMG 3730 / NBRC 12168 / NCIMB 10025 / NRRL B-2784 / 534</strain>
    </source>
</reference>
<reference key="6">
    <citation type="journal article" date="2008" name="FEMS Microbiol. Lett.">
        <title>Triple transcriptional control of the resuscitation promoting factor 2 (rpf2) gene of Corynebacterium glutamicum by the regulators of acetate metabolism RamA and RamB and the cAMP-dependent regulator GlxR.</title>
        <authorList>
            <person name="Jungwirth B."/>
            <person name="Emer D."/>
            <person name="Brune I."/>
            <person name="Hansmeier N."/>
            <person name="Puehler A."/>
            <person name="Eikmanns B.J."/>
            <person name="Tauch A."/>
        </authorList>
    </citation>
    <scope>INDUCTION</scope>
</reference>
<proteinExistence type="evidence at transcript level"/>